<sequence>MTNKIIQQLEAEQMSKEIPTFAPGDTVVVQVKVKEGERSRLQAFEGVVIAKRNRGLNSAFTVRKISSGVGVERTFQTYSPQIDSLAVKRRGDVRKAKLYYLRDLSGKAARIKEKLS</sequence>
<comment type="function">
    <text evidence="1">This protein is located at the 30S-50S ribosomal subunit interface and may play a role in the structure and function of the aminoacyl-tRNA binding site.</text>
</comment>
<comment type="similarity">
    <text evidence="1">Belongs to the bacterial ribosomal protein bL19 family.</text>
</comment>
<name>RL19_PSEPG</name>
<reference key="1">
    <citation type="submission" date="2008-01" db="EMBL/GenBank/DDBJ databases">
        <title>Complete sequence of Pseudomonas putida GB-1.</title>
        <authorList>
            <consortium name="US DOE Joint Genome Institute"/>
            <person name="Copeland A."/>
            <person name="Lucas S."/>
            <person name="Lapidus A."/>
            <person name="Barry K."/>
            <person name="Glavina del Rio T."/>
            <person name="Dalin E."/>
            <person name="Tice H."/>
            <person name="Pitluck S."/>
            <person name="Bruce D."/>
            <person name="Goodwin L."/>
            <person name="Chertkov O."/>
            <person name="Brettin T."/>
            <person name="Detter J.C."/>
            <person name="Han C."/>
            <person name="Kuske C.R."/>
            <person name="Schmutz J."/>
            <person name="Larimer F."/>
            <person name="Land M."/>
            <person name="Hauser L."/>
            <person name="Kyrpides N."/>
            <person name="Kim E."/>
            <person name="McCarthy J.K."/>
            <person name="Richardson P."/>
        </authorList>
    </citation>
    <scope>NUCLEOTIDE SEQUENCE [LARGE SCALE GENOMIC DNA]</scope>
    <source>
        <strain>GB-1</strain>
    </source>
</reference>
<proteinExistence type="inferred from homology"/>
<accession>B0KRI4</accession>
<gene>
    <name evidence="1" type="primary">rplS</name>
    <name type="ordered locus">PputGB1_1070</name>
</gene>
<protein>
    <recommendedName>
        <fullName evidence="1">Large ribosomal subunit protein bL19</fullName>
    </recommendedName>
    <alternativeName>
        <fullName evidence="2">50S ribosomal protein L19</fullName>
    </alternativeName>
</protein>
<organism>
    <name type="scientific">Pseudomonas putida (strain GB-1)</name>
    <dbReference type="NCBI Taxonomy" id="76869"/>
    <lineage>
        <taxon>Bacteria</taxon>
        <taxon>Pseudomonadati</taxon>
        <taxon>Pseudomonadota</taxon>
        <taxon>Gammaproteobacteria</taxon>
        <taxon>Pseudomonadales</taxon>
        <taxon>Pseudomonadaceae</taxon>
        <taxon>Pseudomonas</taxon>
    </lineage>
</organism>
<evidence type="ECO:0000255" key="1">
    <source>
        <dbReference type="HAMAP-Rule" id="MF_00402"/>
    </source>
</evidence>
<evidence type="ECO:0000305" key="2"/>
<feature type="chain" id="PRO_1000080364" description="Large ribosomal subunit protein bL19">
    <location>
        <begin position="1"/>
        <end position="116"/>
    </location>
</feature>
<dbReference type="EMBL" id="CP000926">
    <property type="protein sequence ID" value="ABY96978.1"/>
    <property type="molecule type" value="Genomic_DNA"/>
</dbReference>
<dbReference type="RefSeq" id="WP_003252148.1">
    <property type="nucleotide sequence ID" value="NC_010322.1"/>
</dbReference>
<dbReference type="SMR" id="B0KRI4"/>
<dbReference type="GeneID" id="97166584"/>
<dbReference type="KEGG" id="ppg:PputGB1_1070"/>
<dbReference type="eggNOG" id="COG0335">
    <property type="taxonomic scope" value="Bacteria"/>
</dbReference>
<dbReference type="HOGENOM" id="CLU_103507_2_1_6"/>
<dbReference type="Proteomes" id="UP000002157">
    <property type="component" value="Chromosome"/>
</dbReference>
<dbReference type="GO" id="GO:0022625">
    <property type="term" value="C:cytosolic large ribosomal subunit"/>
    <property type="evidence" value="ECO:0007669"/>
    <property type="project" value="TreeGrafter"/>
</dbReference>
<dbReference type="GO" id="GO:0003735">
    <property type="term" value="F:structural constituent of ribosome"/>
    <property type="evidence" value="ECO:0007669"/>
    <property type="project" value="InterPro"/>
</dbReference>
<dbReference type="GO" id="GO:0006412">
    <property type="term" value="P:translation"/>
    <property type="evidence" value="ECO:0007669"/>
    <property type="project" value="UniProtKB-UniRule"/>
</dbReference>
<dbReference type="FunFam" id="2.30.30.790:FF:000001">
    <property type="entry name" value="50S ribosomal protein L19"/>
    <property type="match status" value="1"/>
</dbReference>
<dbReference type="Gene3D" id="2.30.30.790">
    <property type="match status" value="1"/>
</dbReference>
<dbReference type="HAMAP" id="MF_00402">
    <property type="entry name" value="Ribosomal_bL19"/>
    <property type="match status" value="1"/>
</dbReference>
<dbReference type="InterPro" id="IPR001857">
    <property type="entry name" value="Ribosomal_bL19"/>
</dbReference>
<dbReference type="InterPro" id="IPR018257">
    <property type="entry name" value="Ribosomal_bL19_CS"/>
</dbReference>
<dbReference type="InterPro" id="IPR038657">
    <property type="entry name" value="Ribosomal_bL19_sf"/>
</dbReference>
<dbReference type="InterPro" id="IPR008991">
    <property type="entry name" value="Translation_prot_SH3-like_sf"/>
</dbReference>
<dbReference type="NCBIfam" id="TIGR01024">
    <property type="entry name" value="rplS_bact"/>
    <property type="match status" value="1"/>
</dbReference>
<dbReference type="PANTHER" id="PTHR15680:SF9">
    <property type="entry name" value="LARGE RIBOSOMAL SUBUNIT PROTEIN BL19M"/>
    <property type="match status" value="1"/>
</dbReference>
<dbReference type="PANTHER" id="PTHR15680">
    <property type="entry name" value="RIBOSOMAL PROTEIN L19"/>
    <property type="match status" value="1"/>
</dbReference>
<dbReference type="Pfam" id="PF01245">
    <property type="entry name" value="Ribosomal_L19"/>
    <property type="match status" value="1"/>
</dbReference>
<dbReference type="PIRSF" id="PIRSF002191">
    <property type="entry name" value="Ribosomal_L19"/>
    <property type="match status" value="1"/>
</dbReference>
<dbReference type="PRINTS" id="PR00061">
    <property type="entry name" value="RIBOSOMALL19"/>
</dbReference>
<dbReference type="SUPFAM" id="SSF50104">
    <property type="entry name" value="Translation proteins SH3-like domain"/>
    <property type="match status" value="1"/>
</dbReference>
<dbReference type="PROSITE" id="PS01015">
    <property type="entry name" value="RIBOSOMAL_L19"/>
    <property type="match status" value="1"/>
</dbReference>
<keyword id="KW-0687">Ribonucleoprotein</keyword>
<keyword id="KW-0689">Ribosomal protein</keyword>